<sequence length="119" mass="13137">MFKKVDKKASRTKRHLRVRKKVFGTPDRPRLSVFRSEKNIYAQIIDDVNAVTIVAASSLDKEFSTNGGNKEGAKLVGAAVAKKAIEKGITEVVFDRGGYVYHGRVQELAEGAREAGLKF</sequence>
<organism>
    <name type="scientific">Clostridium botulinum (strain Alaska E43 / Type E3)</name>
    <dbReference type="NCBI Taxonomy" id="508767"/>
    <lineage>
        <taxon>Bacteria</taxon>
        <taxon>Bacillati</taxon>
        <taxon>Bacillota</taxon>
        <taxon>Clostridia</taxon>
        <taxon>Eubacteriales</taxon>
        <taxon>Clostridiaceae</taxon>
        <taxon>Clostridium</taxon>
    </lineage>
</organism>
<gene>
    <name evidence="1" type="primary">rplR</name>
    <name type="ordered locus">CLH_0253</name>
</gene>
<comment type="function">
    <text evidence="1">This is one of the proteins that bind and probably mediate the attachment of the 5S RNA into the large ribosomal subunit, where it forms part of the central protuberance.</text>
</comment>
<comment type="subunit">
    <text evidence="1">Part of the 50S ribosomal subunit; part of the 5S rRNA/L5/L18/L25 subcomplex. Contacts the 5S and 23S rRNAs.</text>
</comment>
<comment type="similarity">
    <text evidence="1">Belongs to the universal ribosomal protein uL18 family.</text>
</comment>
<dbReference type="EMBL" id="CP001078">
    <property type="protein sequence ID" value="ACD53388.1"/>
    <property type="molecule type" value="Genomic_DNA"/>
</dbReference>
<dbReference type="RefSeq" id="WP_003369785.1">
    <property type="nucleotide sequence ID" value="NC_010723.1"/>
</dbReference>
<dbReference type="SMR" id="B2UYC6"/>
<dbReference type="KEGG" id="cbt:CLH_0253"/>
<dbReference type="HOGENOM" id="CLU_098841_0_1_9"/>
<dbReference type="GO" id="GO:0022625">
    <property type="term" value="C:cytosolic large ribosomal subunit"/>
    <property type="evidence" value="ECO:0007669"/>
    <property type="project" value="TreeGrafter"/>
</dbReference>
<dbReference type="GO" id="GO:0008097">
    <property type="term" value="F:5S rRNA binding"/>
    <property type="evidence" value="ECO:0007669"/>
    <property type="project" value="TreeGrafter"/>
</dbReference>
<dbReference type="GO" id="GO:0003735">
    <property type="term" value="F:structural constituent of ribosome"/>
    <property type="evidence" value="ECO:0007669"/>
    <property type="project" value="InterPro"/>
</dbReference>
<dbReference type="GO" id="GO:0006412">
    <property type="term" value="P:translation"/>
    <property type="evidence" value="ECO:0007669"/>
    <property type="project" value="UniProtKB-UniRule"/>
</dbReference>
<dbReference type="CDD" id="cd00432">
    <property type="entry name" value="Ribosomal_L18_L5e"/>
    <property type="match status" value="1"/>
</dbReference>
<dbReference type="FunFam" id="3.30.420.100:FF:000001">
    <property type="entry name" value="50S ribosomal protein L18"/>
    <property type="match status" value="1"/>
</dbReference>
<dbReference type="Gene3D" id="3.30.420.100">
    <property type="match status" value="1"/>
</dbReference>
<dbReference type="HAMAP" id="MF_01337_B">
    <property type="entry name" value="Ribosomal_uL18_B"/>
    <property type="match status" value="1"/>
</dbReference>
<dbReference type="InterPro" id="IPR004389">
    <property type="entry name" value="Ribosomal_uL18_bac-type"/>
</dbReference>
<dbReference type="InterPro" id="IPR005484">
    <property type="entry name" value="Ribosomal_uL18_bac/euk"/>
</dbReference>
<dbReference type="NCBIfam" id="TIGR00060">
    <property type="entry name" value="L18_bact"/>
    <property type="match status" value="1"/>
</dbReference>
<dbReference type="PANTHER" id="PTHR12899">
    <property type="entry name" value="39S RIBOSOMAL PROTEIN L18, MITOCHONDRIAL"/>
    <property type="match status" value="1"/>
</dbReference>
<dbReference type="PANTHER" id="PTHR12899:SF3">
    <property type="entry name" value="LARGE RIBOSOMAL SUBUNIT PROTEIN UL18M"/>
    <property type="match status" value="1"/>
</dbReference>
<dbReference type="Pfam" id="PF00861">
    <property type="entry name" value="Ribosomal_L18p"/>
    <property type="match status" value="1"/>
</dbReference>
<dbReference type="SUPFAM" id="SSF53137">
    <property type="entry name" value="Translational machinery components"/>
    <property type="match status" value="1"/>
</dbReference>
<proteinExistence type="inferred from homology"/>
<name>RL18_CLOBA</name>
<accession>B2UYC6</accession>
<evidence type="ECO:0000255" key="1">
    <source>
        <dbReference type="HAMAP-Rule" id="MF_01337"/>
    </source>
</evidence>
<evidence type="ECO:0000305" key="2"/>
<keyword id="KW-0687">Ribonucleoprotein</keyword>
<keyword id="KW-0689">Ribosomal protein</keyword>
<keyword id="KW-0694">RNA-binding</keyword>
<keyword id="KW-0699">rRNA-binding</keyword>
<reference key="1">
    <citation type="submission" date="2008-05" db="EMBL/GenBank/DDBJ databases">
        <title>Complete genome sequence of Clostridium botulinum E3 str. Alaska E43.</title>
        <authorList>
            <person name="Brinkac L.M."/>
            <person name="Brown J.L."/>
            <person name="Bruce D."/>
            <person name="Detter C."/>
            <person name="Munk C."/>
            <person name="Smith L.A."/>
            <person name="Smith T.J."/>
            <person name="Sutton G."/>
            <person name="Brettin T.S."/>
        </authorList>
    </citation>
    <scope>NUCLEOTIDE SEQUENCE [LARGE SCALE GENOMIC DNA]</scope>
    <source>
        <strain>Alaska E43 / Type E3</strain>
    </source>
</reference>
<protein>
    <recommendedName>
        <fullName evidence="1">Large ribosomal subunit protein uL18</fullName>
    </recommendedName>
    <alternativeName>
        <fullName evidence="2">50S ribosomal protein L18</fullName>
    </alternativeName>
</protein>
<feature type="chain" id="PRO_1000142642" description="Large ribosomal subunit protein uL18">
    <location>
        <begin position="1"/>
        <end position="119"/>
    </location>
</feature>